<comment type="function">
    <text evidence="2">Probable component of the anaphase promoting complex/cyclosome (APC/C), a cell cycle-regulated ubiquitin ligase that controls progression through mitosis and the G1 phase of the cell cycle. The APC/C complex acts by mediating ubiquitination and subsequent degradation of target proteins. Developmental role in early embryogenesis and the metaphase to anaphase transition in meiosis and mitosis.</text>
</comment>
<comment type="pathway">
    <text evidence="3">Protein modification; protein ubiquitination.</text>
</comment>
<comment type="subunit">
    <text evidence="3">The APC/C is probably composed of at least 12 subunits: apc-2, apc-10, apc-11, cdc-26, emb-1, emb-27, emb-30, mat-1, mat-2, mat-3, such-1 and gfi-3.</text>
</comment>
<comment type="interaction">
    <interactant intactId="EBI-321211">
        <id>P34514</id>
    </interactant>
    <interactant intactId="EBI-314913">
        <id>Q20052</id>
        <label>apc-11</label>
    </interactant>
    <organismsDiffer>false</organismsDiffer>
    <experiments>8</experiments>
</comment>
<comment type="disruption phenotype">
    <text evidence="2">RNAi-mediated knockdown results in defective metaphase to anaphase transition (Mat phenotype) and embryos that arrest at the one-cell stage.</text>
</comment>
<comment type="similarity">
    <text evidence="1">Belongs to the cullin family.</text>
</comment>
<protein>
    <recommendedName>
        <fullName evidence="4">Anaphase-promoting complex subunit 2</fullName>
        <shortName>APC2</shortName>
    </recommendedName>
    <alternativeName>
        <fullName>Cyclosome subunit 2</fullName>
    </alternativeName>
</protein>
<name>ANC2_CAEEL</name>
<organism>
    <name type="scientific">Caenorhabditis elegans</name>
    <dbReference type="NCBI Taxonomy" id="6239"/>
    <lineage>
        <taxon>Eukaryota</taxon>
        <taxon>Metazoa</taxon>
        <taxon>Ecdysozoa</taxon>
        <taxon>Nematoda</taxon>
        <taxon>Chromadorea</taxon>
        <taxon>Rhabditida</taxon>
        <taxon>Rhabditina</taxon>
        <taxon>Rhabditomorpha</taxon>
        <taxon>Rhabditoidea</taxon>
        <taxon>Rhabditidae</taxon>
        <taxon>Peloderinae</taxon>
        <taxon>Caenorhabditis</taxon>
    </lineage>
</organism>
<dbReference type="EMBL" id="BX284603">
    <property type="protein sequence ID" value="CCD64457.1"/>
    <property type="molecule type" value="Genomic_DNA"/>
</dbReference>
<dbReference type="PIR" id="S44845">
    <property type="entry name" value="S44845"/>
</dbReference>
<dbReference type="PIR" id="S44846">
    <property type="entry name" value="S44846"/>
</dbReference>
<dbReference type="RefSeq" id="NP_498762.2">
    <property type="nucleotide sequence ID" value="NM_066361.7"/>
</dbReference>
<dbReference type="SMR" id="P34514"/>
<dbReference type="BioGRID" id="41345">
    <property type="interactions" value="10"/>
</dbReference>
<dbReference type="ComplexPortal" id="CPX-3382">
    <property type="entry name" value="Anaphase-promoting complex"/>
</dbReference>
<dbReference type="FunCoup" id="P34514">
    <property type="interactions" value="2114"/>
</dbReference>
<dbReference type="IntAct" id="P34514">
    <property type="interactions" value="4"/>
</dbReference>
<dbReference type="STRING" id="6239.K06H7.6.1"/>
<dbReference type="iPTMnet" id="P34514"/>
<dbReference type="PaxDb" id="6239-K06H7.6"/>
<dbReference type="PeptideAtlas" id="P34514"/>
<dbReference type="EnsemblMetazoa" id="K06H7.6.1">
    <property type="protein sequence ID" value="K06H7.6.1"/>
    <property type="gene ID" value="WBGene00000143"/>
</dbReference>
<dbReference type="GeneID" id="176139"/>
<dbReference type="KEGG" id="cel:CELE_K06H7.6"/>
<dbReference type="UCSC" id="K06H7.6">
    <property type="organism name" value="c. elegans"/>
</dbReference>
<dbReference type="AGR" id="WB:WBGene00000143"/>
<dbReference type="CTD" id="176139"/>
<dbReference type="WormBase" id="K06H7.6">
    <property type="protein sequence ID" value="CE41679"/>
    <property type="gene ID" value="WBGene00000143"/>
    <property type="gene designation" value="apc-2"/>
</dbReference>
<dbReference type="eggNOG" id="KOG2165">
    <property type="taxonomic scope" value="Eukaryota"/>
</dbReference>
<dbReference type="GeneTree" id="ENSGT00390000016127"/>
<dbReference type="HOGENOM" id="CLU_380467_0_0_1"/>
<dbReference type="InParanoid" id="P34514"/>
<dbReference type="OMA" id="AAKWQES"/>
<dbReference type="OrthoDB" id="5581181at2759"/>
<dbReference type="PhylomeDB" id="P34514"/>
<dbReference type="Reactome" id="R-CEL-983168">
    <property type="pathway name" value="Antigen processing: Ubiquitination &amp; Proteasome degradation"/>
</dbReference>
<dbReference type="SignaLink" id="P34514"/>
<dbReference type="UniPathway" id="UPA00143"/>
<dbReference type="PRO" id="PR:P34514"/>
<dbReference type="Proteomes" id="UP000001940">
    <property type="component" value="Chromosome III"/>
</dbReference>
<dbReference type="Bgee" id="WBGene00000143">
    <property type="expression patterns" value="Expressed in germ line (C elegans) and 4 other cell types or tissues"/>
</dbReference>
<dbReference type="GO" id="GO:0005680">
    <property type="term" value="C:anaphase-promoting complex"/>
    <property type="evidence" value="ECO:0000318"/>
    <property type="project" value="GO_Central"/>
</dbReference>
<dbReference type="GO" id="GO:0031625">
    <property type="term" value="F:ubiquitin protein ligase binding"/>
    <property type="evidence" value="ECO:0007669"/>
    <property type="project" value="InterPro"/>
</dbReference>
<dbReference type="GO" id="GO:0031145">
    <property type="term" value="P:anaphase-promoting complex-dependent catabolic process"/>
    <property type="evidence" value="ECO:0000303"/>
    <property type="project" value="ComplexPortal"/>
</dbReference>
<dbReference type="GO" id="GO:0051301">
    <property type="term" value="P:cell division"/>
    <property type="evidence" value="ECO:0007669"/>
    <property type="project" value="UniProtKB-KW"/>
</dbReference>
<dbReference type="GO" id="GO:0051321">
    <property type="term" value="P:meiotic cell cycle"/>
    <property type="evidence" value="ECO:0007669"/>
    <property type="project" value="UniProtKB-KW"/>
</dbReference>
<dbReference type="GO" id="GO:0007091">
    <property type="term" value="P:metaphase/anaphase transition of mitotic cell cycle"/>
    <property type="evidence" value="ECO:0000318"/>
    <property type="project" value="GO_Central"/>
</dbReference>
<dbReference type="GO" id="GO:0070979">
    <property type="term" value="P:protein K11-linked ubiquitination"/>
    <property type="evidence" value="ECO:0000318"/>
    <property type="project" value="GO_Central"/>
</dbReference>
<dbReference type="GO" id="GO:0051445">
    <property type="term" value="P:regulation of meiotic cell cycle"/>
    <property type="evidence" value="ECO:0000303"/>
    <property type="project" value="ComplexPortal"/>
</dbReference>
<dbReference type="GO" id="GO:0007346">
    <property type="term" value="P:regulation of mitotic cell cycle"/>
    <property type="evidence" value="ECO:0000303"/>
    <property type="project" value="ComplexPortal"/>
</dbReference>
<dbReference type="FunFam" id="1.20.1310.10:FF:000113">
    <property type="match status" value="1"/>
</dbReference>
<dbReference type="FunFam" id="1.10.10.10:FF:001240">
    <property type="entry name" value="Anaphase-promoting complex subunit 2"/>
    <property type="match status" value="1"/>
</dbReference>
<dbReference type="Gene3D" id="1.20.1310.10">
    <property type="entry name" value="Cullin Repeats"/>
    <property type="match status" value="1"/>
</dbReference>
<dbReference type="Gene3D" id="3.30.230.130">
    <property type="entry name" value="Cullin, Chain C, Domain 2"/>
    <property type="match status" value="1"/>
</dbReference>
<dbReference type="Gene3D" id="1.10.10.10">
    <property type="entry name" value="Winged helix-like DNA-binding domain superfamily/Winged helix DNA-binding domain"/>
    <property type="match status" value="1"/>
</dbReference>
<dbReference type="InterPro" id="IPR044554">
    <property type="entry name" value="APC2-like"/>
</dbReference>
<dbReference type="InterPro" id="IPR014786">
    <property type="entry name" value="APC2_C"/>
</dbReference>
<dbReference type="InterPro" id="IPR016158">
    <property type="entry name" value="Cullin_homology"/>
</dbReference>
<dbReference type="InterPro" id="IPR036317">
    <property type="entry name" value="Cullin_homology_sf"/>
</dbReference>
<dbReference type="InterPro" id="IPR001373">
    <property type="entry name" value="Cullin_N"/>
</dbReference>
<dbReference type="InterPro" id="IPR036388">
    <property type="entry name" value="WH-like_DNA-bd_sf"/>
</dbReference>
<dbReference type="PANTHER" id="PTHR45957">
    <property type="entry name" value="ANAPHASE-PROMOTING COMPLEX SUBUNIT 2"/>
    <property type="match status" value="1"/>
</dbReference>
<dbReference type="PANTHER" id="PTHR45957:SF1">
    <property type="entry name" value="ANAPHASE-PROMOTING COMPLEX SUBUNIT 2"/>
    <property type="match status" value="1"/>
</dbReference>
<dbReference type="Pfam" id="PF00888">
    <property type="entry name" value="Cullin"/>
    <property type="match status" value="1"/>
</dbReference>
<dbReference type="SMART" id="SM01013">
    <property type="entry name" value="APC2"/>
    <property type="match status" value="1"/>
</dbReference>
<dbReference type="SMART" id="SM00182">
    <property type="entry name" value="CULLIN"/>
    <property type="match status" value="1"/>
</dbReference>
<dbReference type="SUPFAM" id="SSF75632">
    <property type="entry name" value="Cullin homology domain"/>
    <property type="match status" value="1"/>
</dbReference>
<dbReference type="PROSITE" id="PS50069">
    <property type="entry name" value="CULLIN_2"/>
    <property type="match status" value="1"/>
</dbReference>
<feature type="chain" id="PRO_0000119813" description="Anaphase-promoting complex subunit 2" evidence="3">
    <location>
        <begin position="1"/>
        <end position="731"/>
    </location>
</feature>
<gene>
    <name evidence="4" type="primary">apc-2</name>
    <name evidence="4" type="ORF">K06H7.6/K06H7.5</name>
</gene>
<keyword id="KW-0131">Cell cycle</keyword>
<keyword id="KW-0132">Cell division</keyword>
<keyword id="KW-0217">Developmental protein</keyword>
<keyword id="KW-0469">Meiosis</keyword>
<keyword id="KW-0498">Mitosis</keyword>
<keyword id="KW-1185">Reference proteome</keyword>
<keyword id="KW-0833">Ubl conjugation pathway</keyword>
<proteinExistence type="evidence at protein level"/>
<sequence>MSIFDRMTTSKEAAMKYRQFCVSKKKEVWDALIYHAKYAKNIEKVYDMTTVLQRVQQECLMFALEKGVGQPDIRDAAELIFPLAMQKVVIKVLRPYFMSHFTNYRLAMYLPHRKIDHGIDLNQELWTPEKKEICGQYVQDFNPFVNELKTGILNANRHMNAALSVYIRELAATLVMHEKAAFDNELRCSMFQEIMESLRIWSDQVTMQDAFHLISDTIYKDVFQMLSKNAYEMIAVDFPVKFRSLITMKYCLLRTNNHGRVDFTNYLIDQVNTKLLVASVDTKDILKAYAACVESLREMDNSCVVMHKVCGVIREYLKRRPDTVQQIISYITSNKKNELEKDMSLQSKTVRSAMMDEEELKGVNDDFLPENMETLGWENWMPNPTDATVGDGAPGHQGVDVFNMLVSVYGSKELFVKEYRNLLAERLSSSDNKDPEFEKRYLDLLKLRFQYSELQHCEVMLRDVIHSLDIDKKFEDMSERSAGNYDVPIIPISACIISSHYWPKLETEKTEALMPQPLQAAMDVYQETYLDVKRDRKLEWLRSVGCVEVSINIDGVEVDRTIPNMYALLLFLFLEKETWTTAEVVEKMGMSVVVTRKRLEWLVKQGFICMNPIISSDTWTLTRNPSGISIVRPGTPDLEDDEDVEPEENSDMVDALEQYWGYTRNFIANHAPNGEVKAERMHRVYRMFGSPTSAGPTLDHVSAFLQRKVALGLLTCINGSYRIIQEKKDGE</sequence>
<reference key="1">
    <citation type="journal article" date="1994" name="Nature">
        <title>2.2 Mb of contiguous nucleotide sequence from chromosome III of C. elegans.</title>
        <authorList>
            <person name="Wilson R."/>
            <person name="Ainscough R."/>
            <person name="Anderson K."/>
            <person name="Baynes C."/>
            <person name="Berks M."/>
            <person name="Bonfield J."/>
            <person name="Burton J."/>
            <person name="Connell M."/>
            <person name="Copsey T."/>
            <person name="Cooper J."/>
            <person name="Coulson A."/>
            <person name="Craxton M."/>
            <person name="Dear S."/>
            <person name="Du Z."/>
            <person name="Durbin R."/>
            <person name="Favello A."/>
            <person name="Fraser A."/>
            <person name="Fulton L."/>
            <person name="Gardner A."/>
            <person name="Green P."/>
            <person name="Hawkins T."/>
            <person name="Hillier L."/>
            <person name="Jier M."/>
            <person name="Johnston L."/>
            <person name="Jones M."/>
            <person name="Kershaw J."/>
            <person name="Kirsten J."/>
            <person name="Laisster N."/>
            <person name="Latreille P."/>
            <person name="Lightning J."/>
            <person name="Lloyd C."/>
            <person name="Mortimore B."/>
            <person name="O'Callaghan M."/>
            <person name="Parsons J."/>
            <person name="Percy C."/>
            <person name="Rifken L."/>
            <person name="Roopra A."/>
            <person name="Saunders D."/>
            <person name="Shownkeen R."/>
            <person name="Sims M."/>
            <person name="Smaldon N."/>
            <person name="Smith A."/>
            <person name="Smith M."/>
            <person name="Sonnhammer E."/>
            <person name="Staden R."/>
            <person name="Sulston J."/>
            <person name="Thierry-Mieg J."/>
            <person name="Thomas K."/>
            <person name="Vaudin M."/>
            <person name="Vaughan K."/>
            <person name="Waterston R."/>
            <person name="Watson A."/>
            <person name="Weinstock L."/>
            <person name="Wilkinson-Sproat J."/>
            <person name="Wohldman P."/>
        </authorList>
    </citation>
    <scope>NUCLEOTIDE SEQUENCE [LARGE SCALE GENOMIC DNA]</scope>
    <source>
        <strain>Bristol N2</strain>
    </source>
</reference>
<reference key="2">
    <citation type="journal article" date="1998" name="Science">
        <title>Genome sequence of the nematode C. elegans: a platform for investigating biology.</title>
        <authorList>
            <consortium name="The C. elegans sequencing consortium"/>
        </authorList>
    </citation>
    <scope>NUCLEOTIDE SEQUENCE [LARGE SCALE GENOMIC DNA]</scope>
    <source>
        <strain>Bristol N2</strain>
    </source>
</reference>
<reference key="3">
    <citation type="journal article" date="2002" name="Genetics">
        <title>Multiple subunits of the Caenorhabditis elegans anaphase-promoting complex are required for chromosome segregation during meiosis I.</title>
        <authorList>
            <person name="Davis E.S."/>
            <person name="Wille L."/>
            <person name="Chestnut B.A."/>
            <person name="Sadler P.L."/>
            <person name="Shakes D.C."/>
            <person name="Golden A."/>
        </authorList>
    </citation>
    <scope>FUNCTION</scope>
    <scope>DISRUPTION PHENOTYPE</scope>
</reference>
<accession>P34514</accession>
<accession>P34513</accession>
<evidence type="ECO:0000255" key="1">
    <source>
        <dbReference type="PROSITE-ProRule" id="PRU00330"/>
    </source>
</evidence>
<evidence type="ECO:0000269" key="2">
    <source>
    </source>
</evidence>
<evidence type="ECO:0000305" key="3"/>
<evidence type="ECO:0000312" key="4">
    <source>
        <dbReference type="WormBase" id="K06H7.6"/>
    </source>
</evidence>